<proteinExistence type="inferred from homology"/>
<gene>
    <name type="primary">atpF2</name>
    <name type="synonym">atpG</name>
    <name type="ordered locus">RPE_4777</name>
</gene>
<accession>Q07H88</accession>
<comment type="function">
    <text evidence="1">F(1)F(0) ATP synthase produces ATP from ADP in the presence of a proton or sodium gradient. F-type ATPases consist of two structural domains, F(1) containing the extramembraneous catalytic core and F(0) containing the membrane proton channel, linked together by a central stalk and a peripheral stalk. During catalysis, ATP synthesis in the catalytic domain of F(1) is coupled via a rotary mechanism of the central stalk subunits to proton translocation (By similarity).</text>
</comment>
<comment type="function">
    <text evidence="1">Component of the F(0) channel, it forms part of the peripheral stalk, linking F(1) to F(0). The b'-subunit is a diverged and duplicated form of b found in plants and photosynthetic bacteria (By similarity).</text>
</comment>
<comment type="subunit">
    <text evidence="1">F-type ATPases have 2 components, F(1) - the catalytic core - and F(0) - the membrane proton channel. F(1) has five subunits: alpha(3), beta(3), gamma(1), delta(1), epsilon(1). F(0) has three main subunits: a(1), b(2) and c(10-14). The alpha and beta chains form an alternating ring which encloses part of the gamma chain. F(1) is attached to F(0) by a central stalk formed by the gamma and epsilon chains, while a peripheral stalk is formed by the delta and b chains (By similarity).</text>
</comment>
<comment type="subcellular location">
    <subcellularLocation>
        <location evidence="1">Cell inner membrane</location>
        <topology evidence="1">Single-pass membrane protein</topology>
    </subcellularLocation>
</comment>
<comment type="similarity">
    <text evidence="4">Belongs to the ATPase B chain family.</text>
</comment>
<name>ATPF2_RHOP5</name>
<evidence type="ECO:0000250" key="1"/>
<evidence type="ECO:0000255" key="2"/>
<evidence type="ECO:0000256" key="3">
    <source>
        <dbReference type="SAM" id="MobiDB-lite"/>
    </source>
</evidence>
<evidence type="ECO:0000305" key="4"/>
<sequence length="181" mass="18969">MAEGHGTTAHTGAEGGHKAPFPPFQQDTFASQLVSLLIAFVALYLIVSKVALPKVGGVLDARQKKIEDDFAAALRLKGESDDALKAYEDALAQARARAQAIGTETRERLNAAAEAERKTLEQRLAVKLADAEKTIAATREQAMSNVRGIATDAASAIVQQLVGIAPDAKAVGHAVDATLKG</sequence>
<feature type="chain" id="PRO_0000369040" description="ATP synthase subunit b 2">
    <location>
        <begin position="1"/>
        <end position="181"/>
    </location>
</feature>
<feature type="transmembrane region" description="Helical" evidence="2">
    <location>
        <begin position="33"/>
        <end position="53"/>
    </location>
</feature>
<feature type="region of interest" description="Disordered" evidence="3">
    <location>
        <begin position="1"/>
        <end position="20"/>
    </location>
</feature>
<feature type="compositionally biased region" description="Low complexity" evidence="3">
    <location>
        <begin position="1"/>
        <end position="12"/>
    </location>
</feature>
<protein>
    <recommendedName>
        <fullName>ATP synthase subunit b 2</fullName>
    </recommendedName>
    <alternativeName>
        <fullName>ATP synthase F(0) sector subunit b 2</fullName>
    </alternativeName>
    <alternativeName>
        <fullName>ATPase subunit I 2</fullName>
    </alternativeName>
    <alternativeName>
        <fullName>F-type ATPase subunit b 2</fullName>
        <shortName>F-ATPase subunit b 2</shortName>
    </alternativeName>
</protein>
<keyword id="KW-0066">ATP synthesis</keyword>
<keyword id="KW-0997">Cell inner membrane</keyword>
<keyword id="KW-1003">Cell membrane</keyword>
<keyword id="KW-0138">CF(0)</keyword>
<keyword id="KW-0375">Hydrogen ion transport</keyword>
<keyword id="KW-0406">Ion transport</keyword>
<keyword id="KW-0472">Membrane</keyword>
<keyword id="KW-0812">Transmembrane</keyword>
<keyword id="KW-1133">Transmembrane helix</keyword>
<keyword id="KW-0813">Transport</keyword>
<dbReference type="EMBL" id="CP000463">
    <property type="protein sequence ID" value="ABJ08696.1"/>
    <property type="molecule type" value="Genomic_DNA"/>
</dbReference>
<dbReference type="SMR" id="Q07H88"/>
<dbReference type="STRING" id="316055.RPE_4777"/>
<dbReference type="KEGG" id="rpe:RPE_4777"/>
<dbReference type="eggNOG" id="COG0711">
    <property type="taxonomic scope" value="Bacteria"/>
</dbReference>
<dbReference type="HOGENOM" id="CLU_079215_1_2_5"/>
<dbReference type="OrthoDB" id="9805716at2"/>
<dbReference type="GO" id="GO:0005886">
    <property type="term" value="C:plasma membrane"/>
    <property type="evidence" value="ECO:0007669"/>
    <property type="project" value="UniProtKB-SubCell"/>
</dbReference>
<dbReference type="GO" id="GO:0045259">
    <property type="term" value="C:proton-transporting ATP synthase complex"/>
    <property type="evidence" value="ECO:0007669"/>
    <property type="project" value="UniProtKB-KW"/>
</dbReference>
<dbReference type="GO" id="GO:0046933">
    <property type="term" value="F:proton-transporting ATP synthase activity, rotational mechanism"/>
    <property type="evidence" value="ECO:0007669"/>
    <property type="project" value="UniProtKB-UniRule"/>
</dbReference>
<dbReference type="GO" id="GO:0046961">
    <property type="term" value="F:proton-transporting ATPase activity, rotational mechanism"/>
    <property type="evidence" value="ECO:0007669"/>
    <property type="project" value="TreeGrafter"/>
</dbReference>
<dbReference type="CDD" id="cd06503">
    <property type="entry name" value="ATP-synt_Fo_b"/>
    <property type="match status" value="1"/>
</dbReference>
<dbReference type="Gene3D" id="6.10.250.1580">
    <property type="match status" value="1"/>
</dbReference>
<dbReference type="HAMAP" id="MF_01398">
    <property type="entry name" value="ATP_synth_b_bprime"/>
    <property type="match status" value="1"/>
</dbReference>
<dbReference type="InterPro" id="IPR002146">
    <property type="entry name" value="ATP_synth_b/b'su_bac/chlpt"/>
</dbReference>
<dbReference type="InterPro" id="IPR050059">
    <property type="entry name" value="ATP_synthase_B_chain"/>
</dbReference>
<dbReference type="PANTHER" id="PTHR33445:SF1">
    <property type="entry name" value="ATP SYNTHASE SUBUNIT B"/>
    <property type="match status" value="1"/>
</dbReference>
<dbReference type="PANTHER" id="PTHR33445">
    <property type="entry name" value="ATP SYNTHASE SUBUNIT B', CHLOROPLASTIC"/>
    <property type="match status" value="1"/>
</dbReference>
<dbReference type="Pfam" id="PF00430">
    <property type="entry name" value="ATP-synt_B"/>
    <property type="match status" value="1"/>
</dbReference>
<organism>
    <name type="scientific">Rhodopseudomonas palustris (strain BisA53)</name>
    <dbReference type="NCBI Taxonomy" id="316055"/>
    <lineage>
        <taxon>Bacteria</taxon>
        <taxon>Pseudomonadati</taxon>
        <taxon>Pseudomonadota</taxon>
        <taxon>Alphaproteobacteria</taxon>
        <taxon>Hyphomicrobiales</taxon>
        <taxon>Nitrobacteraceae</taxon>
        <taxon>Rhodopseudomonas</taxon>
    </lineage>
</organism>
<reference key="1">
    <citation type="submission" date="2006-09" db="EMBL/GenBank/DDBJ databases">
        <title>Complete sequence of Rhodopseudomonas palustris BisA53.</title>
        <authorList>
            <consortium name="US DOE Joint Genome Institute"/>
            <person name="Copeland A."/>
            <person name="Lucas S."/>
            <person name="Lapidus A."/>
            <person name="Barry K."/>
            <person name="Detter J.C."/>
            <person name="Glavina del Rio T."/>
            <person name="Hammon N."/>
            <person name="Israni S."/>
            <person name="Dalin E."/>
            <person name="Tice H."/>
            <person name="Pitluck S."/>
            <person name="Chain P."/>
            <person name="Malfatti S."/>
            <person name="Shin M."/>
            <person name="Vergez L."/>
            <person name="Schmutz J."/>
            <person name="Larimer F."/>
            <person name="Land M."/>
            <person name="Hauser L."/>
            <person name="Pelletier D.A."/>
            <person name="Kyrpides N."/>
            <person name="Kim E."/>
            <person name="Harwood C.S."/>
            <person name="Oda Y."/>
            <person name="Richardson P."/>
        </authorList>
    </citation>
    <scope>NUCLEOTIDE SEQUENCE [LARGE SCALE GENOMIC DNA]</scope>
    <source>
        <strain>BisA53</strain>
    </source>
</reference>